<gene>
    <name type="ordered locus">SUN_0448</name>
</gene>
<proteinExistence type="inferred from homology"/>
<accession>A6Q7E9</accession>
<keyword id="KW-0963">Cytoplasm</keyword>
<keyword id="KW-0378">Hydrolase</keyword>
<keyword id="KW-0540">Nuclease</keyword>
<keyword id="KW-0690">Ribosome biogenesis</keyword>
<organism>
    <name type="scientific">Sulfurovum sp. (strain NBC37-1)</name>
    <dbReference type="NCBI Taxonomy" id="387093"/>
    <lineage>
        <taxon>Bacteria</taxon>
        <taxon>Pseudomonadati</taxon>
        <taxon>Campylobacterota</taxon>
        <taxon>Epsilonproteobacteria</taxon>
        <taxon>Campylobacterales</taxon>
        <taxon>Sulfurovaceae</taxon>
        <taxon>Sulfurovum</taxon>
    </lineage>
</organism>
<feature type="chain" id="PRO_1000061576" description="Putative pre-16S rRNA nuclease">
    <location>
        <begin position="1"/>
        <end position="128"/>
    </location>
</feature>
<sequence>MKLAAIDVGLKRIGTAICLDGRIVMPQNAILRKNRNQAAHDVVSFLEEWEIEKLVVGLPKGGSSSEEMERRIQHFVSLLELDIPVVYQDEQGSSFEAKEMTQGQFRHKKDGKIDSIAAKIILERHLSL</sequence>
<name>YQGF_SULNB</name>
<dbReference type="EC" id="3.1.-.-" evidence="1"/>
<dbReference type="EMBL" id="AP009179">
    <property type="protein sequence ID" value="BAF71408.1"/>
    <property type="molecule type" value="Genomic_DNA"/>
</dbReference>
<dbReference type="RefSeq" id="WP_011980141.1">
    <property type="nucleotide sequence ID" value="NC_009663.1"/>
</dbReference>
<dbReference type="SMR" id="A6Q7E9"/>
<dbReference type="STRING" id="387093.SUN_0448"/>
<dbReference type="KEGG" id="sun:SUN_0448"/>
<dbReference type="eggNOG" id="COG0816">
    <property type="taxonomic scope" value="Bacteria"/>
</dbReference>
<dbReference type="HOGENOM" id="CLU_098240_2_2_7"/>
<dbReference type="OrthoDB" id="9796140at2"/>
<dbReference type="Proteomes" id="UP000006378">
    <property type="component" value="Chromosome"/>
</dbReference>
<dbReference type="GO" id="GO:0005829">
    <property type="term" value="C:cytosol"/>
    <property type="evidence" value="ECO:0007669"/>
    <property type="project" value="TreeGrafter"/>
</dbReference>
<dbReference type="GO" id="GO:0004518">
    <property type="term" value="F:nuclease activity"/>
    <property type="evidence" value="ECO:0007669"/>
    <property type="project" value="UniProtKB-KW"/>
</dbReference>
<dbReference type="GO" id="GO:0000967">
    <property type="term" value="P:rRNA 5'-end processing"/>
    <property type="evidence" value="ECO:0007669"/>
    <property type="project" value="UniProtKB-UniRule"/>
</dbReference>
<dbReference type="CDD" id="cd16964">
    <property type="entry name" value="YqgF"/>
    <property type="match status" value="1"/>
</dbReference>
<dbReference type="Gene3D" id="3.30.420.140">
    <property type="entry name" value="YqgF/RNase H-like domain"/>
    <property type="match status" value="1"/>
</dbReference>
<dbReference type="HAMAP" id="MF_00651">
    <property type="entry name" value="Nuclease_YqgF"/>
    <property type="match status" value="1"/>
</dbReference>
<dbReference type="InterPro" id="IPR012337">
    <property type="entry name" value="RNaseH-like_sf"/>
</dbReference>
<dbReference type="InterPro" id="IPR005227">
    <property type="entry name" value="YqgF"/>
</dbReference>
<dbReference type="InterPro" id="IPR006641">
    <property type="entry name" value="YqgF/RNaseH-like_dom"/>
</dbReference>
<dbReference type="InterPro" id="IPR037027">
    <property type="entry name" value="YqgF/RNaseH-like_dom_sf"/>
</dbReference>
<dbReference type="NCBIfam" id="NF001026">
    <property type="entry name" value="PRK00109.2-2"/>
    <property type="match status" value="1"/>
</dbReference>
<dbReference type="NCBIfam" id="TIGR00250">
    <property type="entry name" value="RNAse_H_YqgF"/>
    <property type="match status" value="1"/>
</dbReference>
<dbReference type="PANTHER" id="PTHR33317">
    <property type="entry name" value="POLYNUCLEOTIDYL TRANSFERASE, RIBONUCLEASE H-LIKE SUPERFAMILY PROTEIN"/>
    <property type="match status" value="1"/>
</dbReference>
<dbReference type="PANTHER" id="PTHR33317:SF4">
    <property type="entry name" value="POLYNUCLEOTIDYL TRANSFERASE, RIBONUCLEASE H-LIKE SUPERFAMILY PROTEIN"/>
    <property type="match status" value="1"/>
</dbReference>
<dbReference type="Pfam" id="PF03652">
    <property type="entry name" value="RuvX"/>
    <property type="match status" value="1"/>
</dbReference>
<dbReference type="SMART" id="SM00732">
    <property type="entry name" value="YqgFc"/>
    <property type="match status" value="1"/>
</dbReference>
<dbReference type="SUPFAM" id="SSF53098">
    <property type="entry name" value="Ribonuclease H-like"/>
    <property type="match status" value="1"/>
</dbReference>
<evidence type="ECO:0000255" key="1">
    <source>
        <dbReference type="HAMAP-Rule" id="MF_00651"/>
    </source>
</evidence>
<comment type="function">
    <text evidence="1">Could be a nuclease involved in processing of the 5'-end of pre-16S rRNA.</text>
</comment>
<comment type="subcellular location">
    <subcellularLocation>
        <location evidence="1">Cytoplasm</location>
    </subcellularLocation>
</comment>
<comment type="similarity">
    <text evidence="1">Belongs to the YqgF nuclease family.</text>
</comment>
<protein>
    <recommendedName>
        <fullName evidence="1">Putative pre-16S rRNA nuclease</fullName>
        <ecNumber evidence="1">3.1.-.-</ecNumber>
    </recommendedName>
</protein>
<reference key="1">
    <citation type="journal article" date="2007" name="Proc. Natl. Acad. Sci. U.S.A.">
        <title>Deep-sea vent epsilon-proteobacterial genomes provide insights into emergence of pathogens.</title>
        <authorList>
            <person name="Nakagawa S."/>
            <person name="Takaki Y."/>
            <person name="Shimamura S."/>
            <person name="Reysenbach A.-L."/>
            <person name="Takai K."/>
            <person name="Horikoshi K."/>
        </authorList>
    </citation>
    <scope>NUCLEOTIDE SEQUENCE [LARGE SCALE GENOMIC DNA]</scope>
    <source>
        <strain>NBC37-1</strain>
    </source>
</reference>